<proteinExistence type="predicted"/>
<sequence>MKIDIPVKGMTCQHCVDKIEKFVGELEGVSYIGVDLDKQSVQVEFSAPASAEAIEEAILDAGYELG</sequence>
<reference key="1">
    <citation type="journal article" date="1998" name="J. Bacteriol.">
        <title>Properties of the P-type ATPases encoded by the copAP operons of Helicobacter pylori and Helicobacter felis.</title>
        <authorList>
            <person name="Bayle D."/>
            <person name="Waengler S."/>
            <person name="Weitzenegger T."/>
            <person name="Steinhilber W."/>
            <person name="Volz J."/>
            <person name="Przybylski M."/>
            <person name="Schaefer K.P."/>
            <person name="Sachs G."/>
            <person name="Melchers K."/>
        </authorList>
    </citation>
    <scope>NUCLEOTIDE SEQUENCE [GENOMIC DNA]</scope>
    <source>
        <strain>ATCC 49179 / CCUG 28539 / NCTC 12436 / CS1</strain>
    </source>
</reference>
<reference key="2">
    <citation type="submission" date="2010-12" db="EMBL/GenBank/DDBJ databases">
        <title>Comparative whole genome analysis of the carcinogenic bacterial pathogen Helicobacter felis.</title>
        <authorList>
            <person name="Arnold A."/>
            <person name="Zigova Z."/>
            <person name="Lawley T."/>
            <person name="Falkow S."/>
            <person name="Bentley S."/>
            <person name="Aslett M."/>
            <person name="Muller A."/>
        </authorList>
    </citation>
    <scope>NUCLEOTIDE SEQUENCE [LARGE SCALE GENOMIC DNA]</scope>
    <source>
        <strain>ATCC 49179 / CCUG 28539 / NCTC 12436 / CS1</strain>
    </source>
</reference>
<dbReference type="EMBL" id="AJ001932">
    <property type="protein sequence ID" value="CAA05105.1"/>
    <property type="molecule type" value="Genomic_DNA"/>
</dbReference>
<dbReference type="EMBL" id="FQ670179">
    <property type="protein sequence ID" value="CBY83344.1"/>
    <property type="molecule type" value="Genomic_DNA"/>
</dbReference>
<dbReference type="PIR" id="T47270">
    <property type="entry name" value="T47270"/>
</dbReference>
<dbReference type="RefSeq" id="WP_013469708.1">
    <property type="nucleotide sequence ID" value="NC_014810.2"/>
</dbReference>
<dbReference type="SMR" id="O32620"/>
<dbReference type="STRING" id="936155.HFELIS_12600"/>
<dbReference type="GeneID" id="36134465"/>
<dbReference type="KEGG" id="hfe:HFELIS_12600"/>
<dbReference type="eggNOG" id="COG2608">
    <property type="taxonomic scope" value="Bacteria"/>
</dbReference>
<dbReference type="HOGENOM" id="CLU_134973_6_2_7"/>
<dbReference type="OrthoDB" id="9801832at2"/>
<dbReference type="Proteomes" id="UP000007934">
    <property type="component" value="Chromosome"/>
</dbReference>
<dbReference type="GO" id="GO:0005507">
    <property type="term" value="F:copper ion binding"/>
    <property type="evidence" value="ECO:0007669"/>
    <property type="project" value="InterPro"/>
</dbReference>
<dbReference type="GO" id="GO:0006825">
    <property type="term" value="P:copper ion transport"/>
    <property type="evidence" value="ECO:0007669"/>
    <property type="project" value="InterPro"/>
</dbReference>
<dbReference type="CDD" id="cd00371">
    <property type="entry name" value="HMA"/>
    <property type="match status" value="1"/>
</dbReference>
<dbReference type="FunFam" id="3.30.70.100:FF:000001">
    <property type="entry name" value="ATPase copper transporting beta"/>
    <property type="match status" value="1"/>
</dbReference>
<dbReference type="Gene3D" id="3.30.70.100">
    <property type="match status" value="1"/>
</dbReference>
<dbReference type="InterPro" id="IPR000428">
    <property type="entry name" value="Cu-bd"/>
</dbReference>
<dbReference type="InterPro" id="IPR017969">
    <property type="entry name" value="Heavy-metal-associated_CS"/>
</dbReference>
<dbReference type="InterPro" id="IPR006122">
    <property type="entry name" value="HMA_Cu_ion-bd"/>
</dbReference>
<dbReference type="InterPro" id="IPR006121">
    <property type="entry name" value="HMA_dom"/>
</dbReference>
<dbReference type="InterPro" id="IPR036163">
    <property type="entry name" value="HMA_dom_sf"/>
</dbReference>
<dbReference type="NCBIfam" id="NF033781">
    <property type="entry name" value="chaper_CopP"/>
    <property type="match status" value="1"/>
</dbReference>
<dbReference type="NCBIfam" id="TIGR00003">
    <property type="entry name" value="copper ion binding protein"/>
    <property type="match status" value="1"/>
</dbReference>
<dbReference type="Pfam" id="PF00403">
    <property type="entry name" value="HMA"/>
    <property type="match status" value="1"/>
</dbReference>
<dbReference type="PRINTS" id="PR00944">
    <property type="entry name" value="CUEXPORT"/>
</dbReference>
<dbReference type="SUPFAM" id="SSF55008">
    <property type="entry name" value="HMA, heavy metal-associated domain"/>
    <property type="match status" value="1"/>
</dbReference>
<dbReference type="PROSITE" id="PS01047">
    <property type="entry name" value="HMA_1"/>
    <property type="match status" value="1"/>
</dbReference>
<dbReference type="PROSITE" id="PS50846">
    <property type="entry name" value="HMA_2"/>
    <property type="match status" value="1"/>
</dbReference>
<feature type="chain" id="PRO_0000079244" description="COP-associated protein">
    <location>
        <begin position="1"/>
        <end position="66"/>
    </location>
</feature>
<feature type="domain" description="HMA" evidence="1">
    <location>
        <begin position="1"/>
        <end position="66"/>
    </location>
</feature>
<feature type="binding site" evidence="1">
    <location>
        <position position="12"/>
    </location>
    <ligand>
        <name>Cu cation</name>
        <dbReference type="ChEBI" id="CHEBI:23378"/>
    </ligand>
</feature>
<feature type="binding site" evidence="1">
    <location>
        <position position="15"/>
    </location>
    <ligand>
        <name>Cu cation</name>
        <dbReference type="ChEBI" id="CHEBI:23378"/>
    </ligand>
</feature>
<name>COPP_HELFC</name>
<keyword id="KW-0186">Copper</keyword>
<keyword id="KW-0479">Metal-binding</keyword>
<gene>
    <name type="primary">copP</name>
    <name type="ordered locus">Hfelis_12600</name>
</gene>
<accession>O32620</accession>
<accession>E7A9G7</accession>
<evidence type="ECO:0000255" key="1">
    <source>
        <dbReference type="PROSITE-ProRule" id="PRU00280"/>
    </source>
</evidence>
<protein>
    <recommendedName>
        <fullName>COP-associated protein</fullName>
    </recommendedName>
    <alternativeName>
        <fullName>Copper ion-binding protein</fullName>
    </alternativeName>
</protein>
<organism>
    <name type="scientific">Helicobacter felis (strain ATCC 49179 / CCUG 28539 / NCTC 12436 / CS1)</name>
    <dbReference type="NCBI Taxonomy" id="936155"/>
    <lineage>
        <taxon>Bacteria</taxon>
        <taxon>Pseudomonadati</taxon>
        <taxon>Campylobacterota</taxon>
        <taxon>Epsilonproteobacteria</taxon>
        <taxon>Campylobacterales</taxon>
        <taxon>Helicobacteraceae</taxon>
        <taxon>Helicobacter</taxon>
    </lineage>
</organism>
<comment type="function">
    <text>Part of a cation-transporting system which is associated with copper export out of the H.pylori cells.</text>
</comment>